<name>ORFC_PSHV1</name>
<organism>
    <name type="scientific">Psittacid herpesvirus 1 (isolate Amazon parrot/-/97-0001/1997)</name>
    <name type="common">PsHV-1</name>
    <name type="synonym">Pacheco's disease virus</name>
    <dbReference type="NCBI Taxonomy" id="670426"/>
    <lineage>
        <taxon>Viruses</taxon>
        <taxon>Duplodnaviria</taxon>
        <taxon>Heunggongvirae</taxon>
        <taxon>Peploviricota</taxon>
        <taxon>Herviviricetes</taxon>
        <taxon>Herpesvirales</taxon>
        <taxon>Orthoherpesviridae</taxon>
        <taxon>Alphaherpesvirinae</taxon>
        <taxon>Iltovirus</taxon>
        <taxon>Iltovirus psittacidalpha1</taxon>
        <taxon>Psittacid alphaherpesvirus 1</taxon>
    </lineage>
</organism>
<gene>
    <name type="primary">ORFC</name>
</gene>
<protein>
    <recommendedName>
        <fullName>Uncharacterized protein ORFC</fullName>
    </recommendedName>
</protein>
<dbReference type="EMBL" id="AY372243">
    <property type="protein sequence ID" value="AAQ73697.1"/>
    <property type="molecule type" value="Genomic_DNA"/>
</dbReference>
<dbReference type="RefSeq" id="NP_944391.1">
    <property type="nucleotide sequence ID" value="NC_005264.1"/>
</dbReference>
<dbReference type="KEGG" id="vg:4237761"/>
<dbReference type="Proteomes" id="UP000006840">
    <property type="component" value="Segment"/>
</dbReference>
<evidence type="ECO:0000256" key="1">
    <source>
        <dbReference type="SAM" id="MobiDB-lite"/>
    </source>
</evidence>
<keyword id="KW-1185">Reference proteome</keyword>
<accession>Q6UDL3</accession>
<feature type="chain" id="PRO_0000406820" description="Uncharacterized protein ORFC">
    <location>
        <begin position="1"/>
        <end position="372"/>
    </location>
</feature>
<feature type="region of interest" description="Disordered" evidence="1">
    <location>
        <begin position="1"/>
        <end position="127"/>
    </location>
</feature>
<feature type="compositionally biased region" description="Basic residues" evidence="1">
    <location>
        <begin position="1"/>
        <end position="11"/>
    </location>
</feature>
<feature type="compositionally biased region" description="Basic residues" evidence="1">
    <location>
        <begin position="38"/>
        <end position="48"/>
    </location>
</feature>
<feature type="compositionally biased region" description="Basic and acidic residues" evidence="1">
    <location>
        <begin position="50"/>
        <end position="61"/>
    </location>
</feature>
<feature type="compositionally biased region" description="Polar residues" evidence="1">
    <location>
        <begin position="93"/>
        <end position="104"/>
    </location>
</feature>
<reference key="1">
    <citation type="journal article" date="2006" name="J. Virol.">
        <title>Psittacid herpesvirus 1 and infectious laryngotracheitis virus: Comparative genome sequence analysis of two avian alphaherpesviruses.</title>
        <authorList>
            <person name="Thureen D.R."/>
            <person name="Keeler C.L. Jr."/>
        </authorList>
    </citation>
    <scope>NUCLEOTIDE SEQUENCE [LARGE SCALE GENOMIC DNA]</scope>
</reference>
<proteinExistence type="predicted"/>
<organismHost>
    <name type="scientific">Amazona oratrix</name>
    <name type="common">yellow-headed parrot</name>
    <dbReference type="NCBI Taxonomy" id="152276"/>
</organismHost>
<sequence length="372" mass="40626">MNKILGLRRAKSAPLVPGAEKGKEKSVEETGFMTLAGRLRRGMQRLSRRGYGDNRRSRGSENNEQDPQPGDKIASPQRRDYTKSEASCRPGSGKTSPCGSSGTPCSDDAGGGRNGQENSGTRDTPCWMYKDSKSRYRVGVTPDLIPTIFGVSEVAASGLPRCRDKAAKRQPQSLLSPGVEALLVTIAESLETNGKRVSGRTAGKLWSWRVRDKAPERDYRNVTPTMFEGSCFGKPIRAGVFNAPRAYLDDLLGDHYFVPYLRRLPRDFTREETLSLRVATEAAVFANMLWEARHKNNFGAGVSYYPGALASATGTAPDFTDRGRSSLDSPYFASTFLPGIFVILPPGELPIDFMRLAVLLAVSAIETCVTTV</sequence>